<protein>
    <recommendedName>
        <fullName>CBL-interacting protein kinase 1</fullName>
        <ecNumber>2.7.11.1</ecNumber>
    </recommendedName>
    <alternativeName>
        <fullName>OsCIPK01</fullName>
    </alternativeName>
</protein>
<reference key="1">
    <citation type="journal article" date="2002" name="Nature">
        <title>The genome sequence and structure of rice chromosome 1.</title>
        <authorList>
            <person name="Sasaki T."/>
            <person name="Matsumoto T."/>
            <person name="Yamamoto K."/>
            <person name="Sakata K."/>
            <person name="Baba T."/>
            <person name="Katayose Y."/>
            <person name="Wu J."/>
            <person name="Niimura Y."/>
            <person name="Cheng Z."/>
            <person name="Nagamura Y."/>
            <person name="Antonio B.A."/>
            <person name="Kanamori H."/>
            <person name="Hosokawa S."/>
            <person name="Masukawa M."/>
            <person name="Arikawa K."/>
            <person name="Chiden Y."/>
            <person name="Hayashi M."/>
            <person name="Okamoto M."/>
            <person name="Ando T."/>
            <person name="Aoki H."/>
            <person name="Arita K."/>
            <person name="Hamada M."/>
            <person name="Harada C."/>
            <person name="Hijishita S."/>
            <person name="Honda M."/>
            <person name="Ichikawa Y."/>
            <person name="Idonuma A."/>
            <person name="Iijima M."/>
            <person name="Ikeda M."/>
            <person name="Ikeno M."/>
            <person name="Ito S."/>
            <person name="Ito T."/>
            <person name="Ito Y."/>
            <person name="Ito Y."/>
            <person name="Iwabuchi A."/>
            <person name="Kamiya K."/>
            <person name="Karasawa W."/>
            <person name="Katagiri S."/>
            <person name="Kikuta A."/>
            <person name="Kobayashi N."/>
            <person name="Kono I."/>
            <person name="Machita K."/>
            <person name="Maehara T."/>
            <person name="Mizuno H."/>
            <person name="Mizubayashi T."/>
            <person name="Mukai Y."/>
            <person name="Nagasaki H."/>
            <person name="Nakashima M."/>
            <person name="Nakama Y."/>
            <person name="Nakamichi Y."/>
            <person name="Nakamura M."/>
            <person name="Namiki N."/>
            <person name="Negishi M."/>
            <person name="Ohta I."/>
            <person name="Ono N."/>
            <person name="Saji S."/>
            <person name="Sakai K."/>
            <person name="Shibata M."/>
            <person name="Shimokawa T."/>
            <person name="Shomura A."/>
            <person name="Song J."/>
            <person name="Takazaki Y."/>
            <person name="Terasawa K."/>
            <person name="Tsuji K."/>
            <person name="Waki K."/>
            <person name="Yamagata H."/>
            <person name="Yamane H."/>
            <person name="Yoshiki S."/>
            <person name="Yoshihara R."/>
            <person name="Yukawa K."/>
            <person name="Zhong H."/>
            <person name="Iwama H."/>
            <person name="Endo T."/>
            <person name="Ito H."/>
            <person name="Hahn J.H."/>
            <person name="Kim H.-I."/>
            <person name="Eun M.-Y."/>
            <person name="Yano M."/>
            <person name="Jiang J."/>
            <person name="Gojobori T."/>
        </authorList>
    </citation>
    <scope>NUCLEOTIDE SEQUENCE [LARGE SCALE GENOMIC DNA]</scope>
    <source>
        <strain>cv. Nipponbare</strain>
    </source>
</reference>
<reference key="2">
    <citation type="journal article" date="2005" name="Nature">
        <title>The map-based sequence of the rice genome.</title>
        <authorList>
            <consortium name="International rice genome sequencing project (IRGSP)"/>
        </authorList>
    </citation>
    <scope>NUCLEOTIDE SEQUENCE [LARGE SCALE GENOMIC DNA]</scope>
    <source>
        <strain>cv. Nipponbare</strain>
    </source>
</reference>
<reference key="3">
    <citation type="journal article" date="2008" name="Nucleic Acids Res.">
        <title>The rice annotation project database (RAP-DB): 2008 update.</title>
        <authorList>
            <consortium name="The rice annotation project (RAP)"/>
        </authorList>
    </citation>
    <scope>GENOME REANNOTATION</scope>
    <source>
        <strain>cv. Nipponbare</strain>
    </source>
</reference>
<reference key="4">
    <citation type="journal article" date="2013" name="Rice">
        <title>Improvement of the Oryza sativa Nipponbare reference genome using next generation sequence and optical map data.</title>
        <authorList>
            <person name="Kawahara Y."/>
            <person name="de la Bastide M."/>
            <person name="Hamilton J.P."/>
            <person name="Kanamori H."/>
            <person name="McCombie W.R."/>
            <person name="Ouyang S."/>
            <person name="Schwartz D.C."/>
            <person name="Tanaka T."/>
            <person name="Wu J."/>
            <person name="Zhou S."/>
            <person name="Childs K.L."/>
            <person name="Davidson R.M."/>
            <person name="Lin H."/>
            <person name="Quesada-Ocampo L."/>
            <person name="Vaillancourt B."/>
            <person name="Sakai H."/>
            <person name="Lee S.S."/>
            <person name="Kim J."/>
            <person name="Numa H."/>
            <person name="Itoh T."/>
            <person name="Buell C.R."/>
            <person name="Matsumoto T."/>
        </authorList>
    </citation>
    <scope>GENOME REANNOTATION</scope>
    <source>
        <strain>cv. Nipponbare</strain>
    </source>
</reference>
<reference key="5">
    <citation type="journal article" date="2003" name="Science">
        <title>Collection, mapping, and annotation of over 28,000 cDNA clones from japonica rice.</title>
        <authorList>
            <consortium name="The rice full-length cDNA consortium"/>
        </authorList>
    </citation>
    <scope>NUCLEOTIDE SEQUENCE [LARGE SCALE MRNA]</scope>
    <source>
        <strain>cv. Nipponbare</strain>
    </source>
</reference>
<reference key="6">
    <citation type="journal article" date="2004" name="Plant Physiol.">
        <title>Calcium sensors and their interacting protein kinases: genomics of the Arabidopsis and rice CBL-CIPK signaling networks.</title>
        <authorList>
            <person name="Kolukisaoglu U."/>
            <person name="Weinl S."/>
            <person name="Blazevic D."/>
            <person name="Batistic O."/>
            <person name="Kudla J."/>
        </authorList>
    </citation>
    <scope>GENE FAMILY</scope>
    <scope>NOMENCLATURE</scope>
</reference>
<reference key="7">
    <citation type="journal article" date="2007" name="Plant Physiol.">
        <title>Characterization of stress-responsive CIPK genes in rice for stress tolerance improvement.</title>
        <authorList>
            <person name="Xiang Y."/>
            <person name="Huang Y."/>
            <person name="Xiong L."/>
        </authorList>
    </citation>
    <scope>INDUCTION</scope>
</reference>
<name>CIPK1_ORYSJ</name>
<organism>
    <name type="scientific">Oryza sativa subsp. japonica</name>
    <name type="common">Rice</name>
    <dbReference type="NCBI Taxonomy" id="39947"/>
    <lineage>
        <taxon>Eukaryota</taxon>
        <taxon>Viridiplantae</taxon>
        <taxon>Streptophyta</taxon>
        <taxon>Embryophyta</taxon>
        <taxon>Tracheophyta</taxon>
        <taxon>Spermatophyta</taxon>
        <taxon>Magnoliopsida</taxon>
        <taxon>Liliopsida</taxon>
        <taxon>Poales</taxon>
        <taxon>Poaceae</taxon>
        <taxon>BOP clade</taxon>
        <taxon>Oryzoideae</taxon>
        <taxon>Oryzeae</taxon>
        <taxon>Oryzinae</taxon>
        <taxon>Oryza</taxon>
        <taxon>Oryza sativa</taxon>
    </lineage>
</organism>
<evidence type="ECO:0000250" key="1"/>
<evidence type="ECO:0000255" key="2">
    <source>
        <dbReference type="PROSITE-ProRule" id="PRU00159"/>
    </source>
</evidence>
<evidence type="ECO:0000255" key="3">
    <source>
        <dbReference type="PROSITE-ProRule" id="PRU00256"/>
    </source>
</evidence>
<evidence type="ECO:0000255" key="4">
    <source>
        <dbReference type="PROSITE-ProRule" id="PRU10027"/>
    </source>
</evidence>
<evidence type="ECO:0000269" key="5">
    <source>
    </source>
</evidence>
<evidence type="ECO:0000305" key="6"/>
<keyword id="KW-0067">ATP-binding</keyword>
<keyword id="KW-0418">Kinase</keyword>
<keyword id="KW-0464">Manganese</keyword>
<keyword id="KW-0547">Nucleotide-binding</keyword>
<keyword id="KW-1185">Reference proteome</keyword>
<keyword id="KW-0723">Serine/threonine-protein kinase</keyword>
<keyword id="KW-0808">Transferase</keyword>
<gene>
    <name type="primary">CIPK1</name>
    <name type="ordered locus">Os01g0292200</name>
    <name type="ordered locus">LOC_Os01g18800</name>
    <name type="ORF">P0706B05.31</name>
</gene>
<proteinExistence type="evidence at transcript level"/>
<comment type="function">
    <text evidence="1">CIPK serine-threonine protein kinases interact with CBL proteins. Binding of a CBL protein to the regulatory NAF domain of CIPK protein lead to the activation of the kinase in a calcium-dependent manner (By similarity).</text>
</comment>
<comment type="catalytic activity">
    <reaction>
        <text>L-seryl-[protein] + ATP = O-phospho-L-seryl-[protein] + ADP + H(+)</text>
        <dbReference type="Rhea" id="RHEA:17989"/>
        <dbReference type="Rhea" id="RHEA-COMP:9863"/>
        <dbReference type="Rhea" id="RHEA-COMP:11604"/>
        <dbReference type="ChEBI" id="CHEBI:15378"/>
        <dbReference type="ChEBI" id="CHEBI:29999"/>
        <dbReference type="ChEBI" id="CHEBI:30616"/>
        <dbReference type="ChEBI" id="CHEBI:83421"/>
        <dbReference type="ChEBI" id="CHEBI:456216"/>
        <dbReference type="EC" id="2.7.11.1"/>
    </reaction>
</comment>
<comment type="catalytic activity">
    <reaction>
        <text>L-threonyl-[protein] + ATP = O-phospho-L-threonyl-[protein] + ADP + H(+)</text>
        <dbReference type="Rhea" id="RHEA:46608"/>
        <dbReference type="Rhea" id="RHEA-COMP:11060"/>
        <dbReference type="Rhea" id="RHEA-COMP:11605"/>
        <dbReference type="ChEBI" id="CHEBI:15378"/>
        <dbReference type="ChEBI" id="CHEBI:30013"/>
        <dbReference type="ChEBI" id="CHEBI:30616"/>
        <dbReference type="ChEBI" id="CHEBI:61977"/>
        <dbReference type="ChEBI" id="CHEBI:456216"/>
        <dbReference type="EC" id="2.7.11.1"/>
    </reaction>
</comment>
<comment type="cofactor">
    <cofactor evidence="1">
        <name>Mn(2+)</name>
        <dbReference type="ChEBI" id="CHEBI:29035"/>
    </cofactor>
</comment>
<comment type="induction">
    <text evidence="5">By drought and cold stresses and abscisic acid (ABA).</text>
</comment>
<comment type="domain">
    <text evidence="1">The activation loop within the kinase domain is the target of phosphorylation/activation by upstream protein kinases. The PPI motif mediates the interaction with the ABI (abscisic acid-insensitive) phosphatases (By similarity).</text>
</comment>
<comment type="similarity">
    <text evidence="6">Belongs to the protein kinase superfamily. CAMK Ser/Thr protein kinase family. SNF1 subfamily.</text>
</comment>
<sequence length="461" mass="52202">MVNGEAEAECTRASLLGRYEIGRTLGEGNFGKVKYARHLATGAHFAIKILDRNKILSLRFDDQIRREIGTLKLLKHPNVVRLHEVAASKTKIYMVLEYVNGGELFDKIAVKGKLSEHEGRRLFQQLIDAVSYCHDKGVYHRDLKPENVLVDRRGNIKISDFGLSALPQHLGNDGLLHTTCGSPNYIAPEVLQNRGYDGSLSDIWSCGVILYVMLVGYLPFDDRNLVVLYQKIFKGDTQIPKWLSPSARDLLRRILEPNPMKRINIAGIKEHEWFQKDYTPVVPYDDDDDNYLDSVLPIKEQIDEAKQEKPTHINAFQLIGMASALDLSGFFEEEDASQRKIRFTSTHSPKDLFDKIENVVTEMGFQVQRGNSKLKVMKNGRGSKNLRNPSSFLVCTEVVELGPSLYVVELKKSHGDPILYRQLCERLSDELGVCKTEQIQRTESLEDDLESFDSGSSLPGF</sequence>
<feature type="chain" id="PRO_0000338359" description="CBL-interacting protein kinase 1">
    <location>
        <begin position="1"/>
        <end position="461"/>
    </location>
</feature>
<feature type="domain" description="Protein kinase" evidence="2">
    <location>
        <begin position="19"/>
        <end position="274"/>
    </location>
</feature>
<feature type="domain" description="NAF" evidence="3">
    <location>
        <begin position="308"/>
        <end position="332"/>
    </location>
</feature>
<feature type="region of interest" description="Activation loop" evidence="1">
    <location>
        <begin position="160"/>
        <end position="189"/>
    </location>
</feature>
<feature type="region of interest" description="PPI" evidence="1">
    <location>
        <begin position="338"/>
        <end position="367"/>
    </location>
</feature>
<feature type="active site" description="Proton acceptor" evidence="2 4">
    <location>
        <position position="142"/>
    </location>
</feature>
<feature type="binding site" evidence="2">
    <location>
        <begin position="25"/>
        <end position="33"/>
    </location>
    <ligand>
        <name>ATP</name>
        <dbReference type="ChEBI" id="CHEBI:30616"/>
    </ligand>
</feature>
<feature type="binding site" evidence="2">
    <location>
        <position position="48"/>
    </location>
    <ligand>
        <name>ATP</name>
        <dbReference type="ChEBI" id="CHEBI:30616"/>
    </ligand>
</feature>
<accession>Q9LGV5</accession>
<dbReference type="EC" id="2.7.11.1"/>
<dbReference type="EMBL" id="AP002482">
    <property type="protein sequence ID" value="BAA96628.1"/>
    <property type="molecule type" value="Genomic_DNA"/>
</dbReference>
<dbReference type="EMBL" id="AP008207">
    <property type="protein sequence ID" value="BAF04706.1"/>
    <property type="molecule type" value="Genomic_DNA"/>
</dbReference>
<dbReference type="EMBL" id="AP014957">
    <property type="protein sequence ID" value="BAS71661.1"/>
    <property type="molecule type" value="Genomic_DNA"/>
</dbReference>
<dbReference type="EMBL" id="AK065588">
    <property type="status" value="NOT_ANNOTATED_CDS"/>
    <property type="molecule type" value="mRNA"/>
</dbReference>
<dbReference type="RefSeq" id="XP_015622076.1">
    <property type="nucleotide sequence ID" value="XM_015766590.1"/>
</dbReference>
<dbReference type="SMR" id="Q9LGV5"/>
<dbReference type="BioGRID" id="794198">
    <property type="interactions" value="3"/>
</dbReference>
<dbReference type="FunCoup" id="Q9LGV5">
    <property type="interactions" value="137"/>
</dbReference>
<dbReference type="STRING" id="39947.Q9LGV5"/>
<dbReference type="PaxDb" id="39947-Q9LGV5"/>
<dbReference type="EnsemblPlants" id="Os01t0292200-01">
    <property type="protein sequence ID" value="Os01t0292200-01"/>
    <property type="gene ID" value="Os01g0292200"/>
</dbReference>
<dbReference type="Gramene" id="Os01t0292200-01">
    <property type="protein sequence ID" value="Os01t0292200-01"/>
    <property type="gene ID" value="Os01g0292200"/>
</dbReference>
<dbReference type="KEGG" id="dosa:Os01g0292200"/>
<dbReference type="eggNOG" id="KOG0583">
    <property type="taxonomic scope" value="Eukaryota"/>
</dbReference>
<dbReference type="HOGENOM" id="CLU_000288_59_0_1"/>
<dbReference type="InParanoid" id="Q9LGV5"/>
<dbReference type="OMA" id="KSHGDPI"/>
<dbReference type="OrthoDB" id="193931at2759"/>
<dbReference type="Proteomes" id="UP000000763">
    <property type="component" value="Chromosome 1"/>
</dbReference>
<dbReference type="Proteomes" id="UP000059680">
    <property type="component" value="Chromosome 1"/>
</dbReference>
<dbReference type="ExpressionAtlas" id="Q9LGV5">
    <property type="expression patterns" value="baseline and differential"/>
</dbReference>
<dbReference type="GO" id="GO:0005524">
    <property type="term" value="F:ATP binding"/>
    <property type="evidence" value="ECO:0007669"/>
    <property type="project" value="UniProtKB-KW"/>
</dbReference>
<dbReference type="GO" id="GO:0106310">
    <property type="term" value="F:protein serine kinase activity"/>
    <property type="evidence" value="ECO:0007669"/>
    <property type="project" value="RHEA"/>
</dbReference>
<dbReference type="GO" id="GO:0004674">
    <property type="term" value="F:protein serine/threonine kinase activity"/>
    <property type="evidence" value="ECO:0000318"/>
    <property type="project" value="GO_Central"/>
</dbReference>
<dbReference type="GO" id="GO:0007165">
    <property type="term" value="P:signal transduction"/>
    <property type="evidence" value="ECO:0007669"/>
    <property type="project" value="InterPro"/>
</dbReference>
<dbReference type="CDD" id="cd12195">
    <property type="entry name" value="CIPK_C"/>
    <property type="match status" value="1"/>
</dbReference>
<dbReference type="FunFam" id="1.10.510.10:FF:000279">
    <property type="entry name" value="Non-specific serine/threonine protein kinase"/>
    <property type="match status" value="1"/>
</dbReference>
<dbReference type="FunFam" id="3.30.200.20:FF:000096">
    <property type="entry name" value="Non-specific serine/threonine protein kinase"/>
    <property type="match status" value="1"/>
</dbReference>
<dbReference type="FunFam" id="3.30.310.80:FF:000005">
    <property type="entry name" value="Non-specific serine/threonine protein kinase"/>
    <property type="match status" value="1"/>
</dbReference>
<dbReference type="Gene3D" id="3.30.310.80">
    <property type="entry name" value="Kinase associated domain 1, KA1"/>
    <property type="match status" value="1"/>
</dbReference>
<dbReference type="Gene3D" id="3.30.200.20">
    <property type="entry name" value="Phosphorylase Kinase, domain 1"/>
    <property type="match status" value="1"/>
</dbReference>
<dbReference type="Gene3D" id="1.10.510.10">
    <property type="entry name" value="Transferase(Phosphotransferase) domain 1"/>
    <property type="match status" value="1"/>
</dbReference>
<dbReference type="InterPro" id="IPR011009">
    <property type="entry name" value="Kinase-like_dom_sf"/>
</dbReference>
<dbReference type="InterPro" id="IPR018451">
    <property type="entry name" value="NAF/FISL_domain"/>
</dbReference>
<dbReference type="InterPro" id="IPR004041">
    <property type="entry name" value="NAF_dom"/>
</dbReference>
<dbReference type="InterPro" id="IPR000719">
    <property type="entry name" value="Prot_kinase_dom"/>
</dbReference>
<dbReference type="InterPro" id="IPR017441">
    <property type="entry name" value="Protein_kinase_ATP_BS"/>
</dbReference>
<dbReference type="InterPro" id="IPR008271">
    <property type="entry name" value="Ser/Thr_kinase_AS"/>
</dbReference>
<dbReference type="PANTHER" id="PTHR43895">
    <property type="entry name" value="CALCIUM/CALMODULIN-DEPENDENT PROTEIN KINASE KINASE-RELATED"/>
    <property type="match status" value="1"/>
</dbReference>
<dbReference type="PANTHER" id="PTHR43895:SF158">
    <property type="entry name" value="NON-SPECIFIC SERINE_THREONINE PROTEIN KINASE"/>
    <property type="match status" value="1"/>
</dbReference>
<dbReference type="Pfam" id="PF03822">
    <property type="entry name" value="NAF"/>
    <property type="match status" value="1"/>
</dbReference>
<dbReference type="Pfam" id="PF00069">
    <property type="entry name" value="Pkinase"/>
    <property type="match status" value="1"/>
</dbReference>
<dbReference type="SMART" id="SM00220">
    <property type="entry name" value="S_TKc"/>
    <property type="match status" value="1"/>
</dbReference>
<dbReference type="SUPFAM" id="SSF56112">
    <property type="entry name" value="Protein kinase-like (PK-like)"/>
    <property type="match status" value="1"/>
</dbReference>
<dbReference type="PROSITE" id="PS50816">
    <property type="entry name" value="NAF"/>
    <property type="match status" value="1"/>
</dbReference>
<dbReference type="PROSITE" id="PS00107">
    <property type="entry name" value="PROTEIN_KINASE_ATP"/>
    <property type="match status" value="1"/>
</dbReference>
<dbReference type="PROSITE" id="PS50011">
    <property type="entry name" value="PROTEIN_KINASE_DOM"/>
    <property type="match status" value="1"/>
</dbReference>
<dbReference type="PROSITE" id="PS00108">
    <property type="entry name" value="PROTEIN_KINASE_ST"/>
    <property type="match status" value="1"/>
</dbReference>